<reference key="1">
    <citation type="journal article" date="1997" name="Endocrinology">
        <title>Two novel members of the prolactin/growth hormone family are expressed in the mouse placenta.</title>
        <authorList>
            <person name="Lin J."/>
            <person name="Poole J."/>
            <person name="Linzer D.I."/>
        </authorList>
    </citation>
    <scope>NUCLEOTIDE SEQUENCE [MRNA]</scope>
    <scope>TISSUE SPECIFICITY</scope>
    <source>
        <strain>C57BL/6J</strain>
    </source>
</reference>
<reference key="2">
    <citation type="journal article" date="2005" name="Science">
        <title>The transcriptional landscape of the mammalian genome.</title>
        <authorList>
            <person name="Carninci P."/>
            <person name="Kasukawa T."/>
            <person name="Katayama S."/>
            <person name="Gough J."/>
            <person name="Frith M.C."/>
            <person name="Maeda N."/>
            <person name="Oyama R."/>
            <person name="Ravasi T."/>
            <person name="Lenhard B."/>
            <person name="Wells C."/>
            <person name="Kodzius R."/>
            <person name="Shimokawa K."/>
            <person name="Bajic V.B."/>
            <person name="Brenner S.E."/>
            <person name="Batalov S."/>
            <person name="Forrest A.R."/>
            <person name="Zavolan M."/>
            <person name="Davis M.J."/>
            <person name="Wilming L.G."/>
            <person name="Aidinis V."/>
            <person name="Allen J.E."/>
            <person name="Ambesi-Impiombato A."/>
            <person name="Apweiler R."/>
            <person name="Aturaliya R.N."/>
            <person name="Bailey T.L."/>
            <person name="Bansal M."/>
            <person name="Baxter L."/>
            <person name="Beisel K.W."/>
            <person name="Bersano T."/>
            <person name="Bono H."/>
            <person name="Chalk A.M."/>
            <person name="Chiu K.P."/>
            <person name="Choudhary V."/>
            <person name="Christoffels A."/>
            <person name="Clutterbuck D.R."/>
            <person name="Crowe M.L."/>
            <person name="Dalla E."/>
            <person name="Dalrymple B.P."/>
            <person name="de Bono B."/>
            <person name="Della Gatta G."/>
            <person name="di Bernardo D."/>
            <person name="Down T."/>
            <person name="Engstrom P."/>
            <person name="Fagiolini M."/>
            <person name="Faulkner G."/>
            <person name="Fletcher C.F."/>
            <person name="Fukushima T."/>
            <person name="Furuno M."/>
            <person name="Futaki S."/>
            <person name="Gariboldi M."/>
            <person name="Georgii-Hemming P."/>
            <person name="Gingeras T.R."/>
            <person name="Gojobori T."/>
            <person name="Green R.E."/>
            <person name="Gustincich S."/>
            <person name="Harbers M."/>
            <person name="Hayashi Y."/>
            <person name="Hensch T.K."/>
            <person name="Hirokawa N."/>
            <person name="Hill D."/>
            <person name="Huminiecki L."/>
            <person name="Iacono M."/>
            <person name="Ikeo K."/>
            <person name="Iwama A."/>
            <person name="Ishikawa T."/>
            <person name="Jakt M."/>
            <person name="Kanapin A."/>
            <person name="Katoh M."/>
            <person name="Kawasawa Y."/>
            <person name="Kelso J."/>
            <person name="Kitamura H."/>
            <person name="Kitano H."/>
            <person name="Kollias G."/>
            <person name="Krishnan S.P."/>
            <person name="Kruger A."/>
            <person name="Kummerfeld S.K."/>
            <person name="Kurochkin I.V."/>
            <person name="Lareau L.F."/>
            <person name="Lazarevic D."/>
            <person name="Lipovich L."/>
            <person name="Liu J."/>
            <person name="Liuni S."/>
            <person name="McWilliam S."/>
            <person name="Madan Babu M."/>
            <person name="Madera M."/>
            <person name="Marchionni L."/>
            <person name="Matsuda H."/>
            <person name="Matsuzawa S."/>
            <person name="Miki H."/>
            <person name="Mignone F."/>
            <person name="Miyake S."/>
            <person name="Morris K."/>
            <person name="Mottagui-Tabar S."/>
            <person name="Mulder N."/>
            <person name="Nakano N."/>
            <person name="Nakauchi H."/>
            <person name="Ng P."/>
            <person name="Nilsson R."/>
            <person name="Nishiguchi S."/>
            <person name="Nishikawa S."/>
            <person name="Nori F."/>
            <person name="Ohara O."/>
            <person name="Okazaki Y."/>
            <person name="Orlando V."/>
            <person name="Pang K.C."/>
            <person name="Pavan W.J."/>
            <person name="Pavesi G."/>
            <person name="Pesole G."/>
            <person name="Petrovsky N."/>
            <person name="Piazza S."/>
            <person name="Reed J."/>
            <person name="Reid J.F."/>
            <person name="Ring B.Z."/>
            <person name="Ringwald M."/>
            <person name="Rost B."/>
            <person name="Ruan Y."/>
            <person name="Salzberg S.L."/>
            <person name="Sandelin A."/>
            <person name="Schneider C."/>
            <person name="Schoenbach C."/>
            <person name="Sekiguchi K."/>
            <person name="Semple C.A."/>
            <person name="Seno S."/>
            <person name="Sessa L."/>
            <person name="Sheng Y."/>
            <person name="Shibata Y."/>
            <person name="Shimada H."/>
            <person name="Shimada K."/>
            <person name="Silva D."/>
            <person name="Sinclair B."/>
            <person name="Sperling S."/>
            <person name="Stupka E."/>
            <person name="Sugiura K."/>
            <person name="Sultana R."/>
            <person name="Takenaka Y."/>
            <person name="Taki K."/>
            <person name="Tammoja K."/>
            <person name="Tan S.L."/>
            <person name="Tang S."/>
            <person name="Taylor M.S."/>
            <person name="Tegner J."/>
            <person name="Teichmann S.A."/>
            <person name="Ueda H.R."/>
            <person name="van Nimwegen E."/>
            <person name="Verardo R."/>
            <person name="Wei C.L."/>
            <person name="Yagi K."/>
            <person name="Yamanishi H."/>
            <person name="Zabarovsky E."/>
            <person name="Zhu S."/>
            <person name="Zimmer A."/>
            <person name="Hide W."/>
            <person name="Bult C."/>
            <person name="Grimmond S.M."/>
            <person name="Teasdale R.D."/>
            <person name="Liu E.T."/>
            <person name="Brusic V."/>
            <person name="Quackenbush J."/>
            <person name="Wahlestedt C."/>
            <person name="Mattick J.S."/>
            <person name="Hume D.A."/>
            <person name="Kai C."/>
            <person name="Sasaki D."/>
            <person name="Tomaru Y."/>
            <person name="Fukuda S."/>
            <person name="Kanamori-Katayama M."/>
            <person name="Suzuki M."/>
            <person name="Aoki J."/>
            <person name="Arakawa T."/>
            <person name="Iida J."/>
            <person name="Imamura K."/>
            <person name="Itoh M."/>
            <person name="Kato T."/>
            <person name="Kawaji H."/>
            <person name="Kawagashira N."/>
            <person name="Kawashima T."/>
            <person name="Kojima M."/>
            <person name="Kondo S."/>
            <person name="Konno H."/>
            <person name="Nakano K."/>
            <person name="Ninomiya N."/>
            <person name="Nishio T."/>
            <person name="Okada M."/>
            <person name="Plessy C."/>
            <person name="Shibata K."/>
            <person name="Shiraki T."/>
            <person name="Suzuki S."/>
            <person name="Tagami M."/>
            <person name="Waki K."/>
            <person name="Watahiki A."/>
            <person name="Okamura-Oho Y."/>
            <person name="Suzuki H."/>
            <person name="Kawai J."/>
            <person name="Hayashizaki Y."/>
        </authorList>
    </citation>
    <scope>NUCLEOTIDE SEQUENCE [LARGE SCALE MRNA]</scope>
    <source>
        <strain>C57BL/6J</strain>
        <tissue>Placenta</tissue>
    </source>
</reference>
<reference key="3">
    <citation type="journal article" date="2009" name="PLoS Biol.">
        <title>Lineage-specific biology revealed by a finished genome assembly of the mouse.</title>
        <authorList>
            <person name="Church D.M."/>
            <person name="Goodstadt L."/>
            <person name="Hillier L.W."/>
            <person name="Zody M.C."/>
            <person name="Goldstein S."/>
            <person name="She X."/>
            <person name="Bult C.J."/>
            <person name="Agarwala R."/>
            <person name="Cherry J.L."/>
            <person name="DiCuccio M."/>
            <person name="Hlavina W."/>
            <person name="Kapustin Y."/>
            <person name="Meric P."/>
            <person name="Maglott D."/>
            <person name="Birtle Z."/>
            <person name="Marques A.C."/>
            <person name="Graves T."/>
            <person name="Zhou S."/>
            <person name="Teague B."/>
            <person name="Potamousis K."/>
            <person name="Churas C."/>
            <person name="Place M."/>
            <person name="Herschleb J."/>
            <person name="Runnheim R."/>
            <person name="Forrest D."/>
            <person name="Amos-Landgraf J."/>
            <person name="Schwartz D.C."/>
            <person name="Cheng Z."/>
            <person name="Lindblad-Toh K."/>
            <person name="Eichler E.E."/>
            <person name="Ponting C.P."/>
        </authorList>
    </citation>
    <scope>NUCLEOTIDE SEQUENCE [LARGE SCALE GENOMIC DNA]</scope>
    <source>
        <strain>C57BL/6J</strain>
    </source>
</reference>
<reference key="4">
    <citation type="journal article" date="2004" name="Genome Res.">
        <title>The status, quality, and expansion of the NIH full-length cDNA project: the Mammalian Gene Collection (MGC).</title>
        <authorList>
            <consortium name="The MGC Project Team"/>
        </authorList>
    </citation>
    <scope>NUCLEOTIDE SEQUENCE [LARGE SCALE MRNA]</scope>
    <source>
        <tissue>Placenta</tissue>
    </source>
</reference>
<accession>O54831</accession>
<feature type="signal peptide" evidence="2">
    <location>
        <begin position="1"/>
        <end position="30"/>
    </location>
</feature>
<feature type="chain" id="PRO_0000045130" description="Prolactin-7A2">
    <location>
        <begin position="31"/>
        <end position="253"/>
    </location>
</feature>
<feature type="glycosylation site" description="N-linked (GlcNAc...) asparagine" evidence="2">
    <location>
        <position position="36"/>
    </location>
</feature>
<feature type="glycosylation site" description="N-linked (GlcNAc...) asparagine" evidence="2">
    <location>
        <position position="103"/>
    </location>
</feature>
<feature type="glycosylation site" description="N-linked (GlcNAc...) asparagine" evidence="2">
    <location>
        <position position="135"/>
    </location>
</feature>
<feature type="disulfide bond" evidence="1">
    <location>
        <begin position="101"/>
        <end position="218"/>
    </location>
</feature>
<feature type="disulfide bond" evidence="1">
    <location>
        <begin position="235"/>
        <end position="244"/>
    </location>
</feature>
<comment type="subcellular location">
    <subcellularLocation>
        <location evidence="1">Secreted</location>
    </subcellularLocation>
</comment>
<comment type="tissue specificity">
    <text evidence="3">Expression restricted to the placental tissue. Expressed only in the spongiotrophoblasts.</text>
</comment>
<comment type="developmental stage">
    <text>Not detected until later in gestation.</text>
</comment>
<comment type="similarity">
    <text evidence="4">Belongs to the somatotropin/prolactin family.</text>
</comment>
<keyword id="KW-1015">Disulfide bond</keyword>
<keyword id="KW-0325">Glycoprotein</keyword>
<keyword id="KW-0372">Hormone</keyword>
<keyword id="KW-1185">Reference proteome</keyword>
<keyword id="KW-0964">Secreted</keyword>
<keyword id="KW-0732">Signal</keyword>
<organism>
    <name type="scientific">Mus musculus</name>
    <name type="common">Mouse</name>
    <dbReference type="NCBI Taxonomy" id="10090"/>
    <lineage>
        <taxon>Eukaryota</taxon>
        <taxon>Metazoa</taxon>
        <taxon>Chordata</taxon>
        <taxon>Craniata</taxon>
        <taxon>Vertebrata</taxon>
        <taxon>Euteleostomi</taxon>
        <taxon>Mammalia</taxon>
        <taxon>Eutheria</taxon>
        <taxon>Euarchontoglires</taxon>
        <taxon>Glires</taxon>
        <taxon>Rodentia</taxon>
        <taxon>Myomorpha</taxon>
        <taxon>Muroidea</taxon>
        <taxon>Muridae</taxon>
        <taxon>Murinae</taxon>
        <taxon>Mus</taxon>
        <taxon>Mus</taxon>
    </lineage>
</organism>
<gene>
    <name type="primary">Prl7a2</name>
    <name type="synonym">Prlpf</name>
</gene>
<name>PR7A2_MOUSE</name>
<sequence>MSFSFSQPCPSGALLLVVVSSLLLWENVASVPLSSNETDGYPLSINGLFHNAMRLTWNIKNLNMELRKTYTVNQVSEKLYENYMLDFIEDMEYLVKALTCCHNYSIKTPENLDEAQQIPFNEFPKLILSRMWAWNETSKVLLTTLRSIPGMHDDVISLAKNIETKLAELFEYTQSILNSIYGTTTTGNVEYTVFSGLEDLKSSDEEFSLFDLCKFSYCLRVDIHMVELYLKLLECVVYVSSDVCLSKNIRDAS</sequence>
<protein>
    <recommendedName>
        <fullName>Prolactin-7A2</fullName>
    </recommendedName>
    <alternativeName>
        <fullName>Placental prolactin-like protein F</fullName>
        <shortName>PLP-F</shortName>
        <shortName>PRL-like protein F</shortName>
    </alternativeName>
</protein>
<proteinExistence type="evidence at transcript level"/>
<dbReference type="EMBL" id="AF011382">
    <property type="protein sequence ID" value="AAB92398.1"/>
    <property type="molecule type" value="mRNA"/>
</dbReference>
<dbReference type="EMBL" id="AK005455">
    <property type="protein sequence ID" value="BAB24047.1"/>
    <property type="molecule type" value="mRNA"/>
</dbReference>
<dbReference type="EMBL" id="AK131665">
    <property type="protein sequence ID" value="BAE20752.1"/>
    <property type="molecule type" value="mRNA"/>
</dbReference>
<dbReference type="EMBL" id="AL590522">
    <property type="protein sequence ID" value="CAI23987.1"/>
    <property type="molecule type" value="Genomic_DNA"/>
</dbReference>
<dbReference type="EMBL" id="BC099468">
    <property type="protein sequence ID" value="AAH99468.1"/>
    <property type="molecule type" value="mRNA"/>
</dbReference>
<dbReference type="CCDS" id="CCDS26404.1"/>
<dbReference type="RefSeq" id="NP_035298.1">
    <property type="nucleotide sequence ID" value="NM_011168.4"/>
</dbReference>
<dbReference type="SMR" id="O54831"/>
<dbReference type="FunCoup" id="O54831">
    <property type="interactions" value="26"/>
</dbReference>
<dbReference type="STRING" id="10090.ENSMUSP00000006660"/>
<dbReference type="GlyCosmos" id="O54831">
    <property type="glycosylation" value="3 sites, No reported glycans"/>
</dbReference>
<dbReference type="GlyGen" id="O54831">
    <property type="glycosylation" value="3 sites"/>
</dbReference>
<dbReference type="PaxDb" id="10090-ENSMUSP00000006660"/>
<dbReference type="DNASU" id="19114"/>
<dbReference type="Ensembl" id="ENSMUST00000006660.7">
    <property type="protein sequence ID" value="ENSMUSP00000006660.6"/>
    <property type="gene ID" value="ENSMUSG00000046899.8"/>
</dbReference>
<dbReference type="GeneID" id="19114"/>
<dbReference type="KEGG" id="mmu:19114"/>
<dbReference type="UCSC" id="uc007pya.1">
    <property type="organism name" value="mouse"/>
</dbReference>
<dbReference type="AGR" id="MGI:1206571"/>
<dbReference type="CTD" id="19114"/>
<dbReference type="MGI" id="MGI:1206571">
    <property type="gene designation" value="Prl7a2"/>
</dbReference>
<dbReference type="VEuPathDB" id="HostDB:ENSMUSG00000046899"/>
<dbReference type="eggNOG" id="ENOG502QYU3">
    <property type="taxonomic scope" value="Eukaryota"/>
</dbReference>
<dbReference type="GeneTree" id="ENSGT00950000182818"/>
<dbReference type="HOGENOM" id="CLU_088274_0_1_1"/>
<dbReference type="InParanoid" id="O54831"/>
<dbReference type="OMA" id="FIEDMEY"/>
<dbReference type="OrthoDB" id="9623809at2759"/>
<dbReference type="PhylomeDB" id="O54831"/>
<dbReference type="TreeFam" id="TF332592"/>
<dbReference type="BioGRID-ORCS" id="19114">
    <property type="hits" value="0 hits in 76 CRISPR screens"/>
</dbReference>
<dbReference type="PRO" id="PR:O54831"/>
<dbReference type="Proteomes" id="UP000000589">
    <property type="component" value="Chromosome 13"/>
</dbReference>
<dbReference type="RNAct" id="O54831">
    <property type="molecule type" value="protein"/>
</dbReference>
<dbReference type="Bgee" id="ENSMUSG00000046899">
    <property type="expression patterns" value="Expressed in placenta labyrinth and 15 other cell types or tissues"/>
</dbReference>
<dbReference type="ExpressionAtlas" id="O54831">
    <property type="expression patterns" value="baseline and differential"/>
</dbReference>
<dbReference type="GO" id="GO:0005576">
    <property type="term" value="C:extracellular region"/>
    <property type="evidence" value="ECO:0007669"/>
    <property type="project" value="UniProtKB-SubCell"/>
</dbReference>
<dbReference type="GO" id="GO:0005179">
    <property type="term" value="F:hormone activity"/>
    <property type="evidence" value="ECO:0007669"/>
    <property type="project" value="UniProtKB-KW"/>
</dbReference>
<dbReference type="CDD" id="cd10288">
    <property type="entry name" value="prolactin_like"/>
    <property type="match status" value="1"/>
</dbReference>
<dbReference type="FunFam" id="1.20.1250.10:FF:000041">
    <property type="entry name" value="Growth hormone d20"/>
    <property type="match status" value="1"/>
</dbReference>
<dbReference type="Gene3D" id="1.20.1250.10">
    <property type="match status" value="1"/>
</dbReference>
<dbReference type="InterPro" id="IPR009079">
    <property type="entry name" value="4_helix_cytokine-like_core"/>
</dbReference>
<dbReference type="InterPro" id="IPR001400">
    <property type="entry name" value="Somatotropin/Prolactin"/>
</dbReference>
<dbReference type="InterPro" id="IPR018116">
    <property type="entry name" value="Somatotropin_CS"/>
</dbReference>
<dbReference type="PANTHER" id="PTHR11417:SF9">
    <property type="entry name" value="PROLACTIN-7A2"/>
    <property type="match status" value="1"/>
</dbReference>
<dbReference type="PANTHER" id="PTHR11417">
    <property type="entry name" value="SOMATOTROPIN,PROLACTIN"/>
    <property type="match status" value="1"/>
</dbReference>
<dbReference type="Pfam" id="PF00103">
    <property type="entry name" value="Hormone_1"/>
    <property type="match status" value="1"/>
</dbReference>
<dbReference type="SUPFAM" id="SSF47266">
    <property type="entry name" value="4-helical cytokines"/>
    <property type="match status" value="1"/>
</dbReference>
<dbReference type="PROSITE" id="PS00338">
    <property type="entry name" value="SOMATOTROPIN_2"/>
    <property type="match status" value="1"/>
</dbReference>
<evidence type="ECO:0000250" key="1"/>
<evidence type="ECO:0000255" key="2"/>
<evidence type="ECO:0000269" key="3">
    <source>
    </source>
</evidence>
<evidence type="ECO:0000305" key="4"/>